<accession>B3H1F1</accession>
<comment type="function">
    <text evidence="1">Catalyzes carboxymethyl transfer from carboxy-S-adenosyl-L-methionine (Cx-SAM) to 5-hydroxyuridine (ho5U) to form 5-carboxymethoxyuridine (cmo5U) at position 34 in tRNAs.</text>
</comment>
<comment type="catalytic activity">
    <reaction evidence="1">
        <text>carboxy-S-adenosyl-L-methionine + 5-hydroxyuridine(34) in tRNA = 5-carboxymethoxyuridine(34) in tRNA + S-adenosyl-L-homocysteine + H(+)</text>
        <dbReference type="Rhea" id="RHEA:52848"/>
        <dbReference type="Rhea" id="RHEA-COMP:13381"/>
        <dbReference type="Rhea" id="RHEA-COMP:13383"/>
        <dbReference type="ChEBI" id="CHEBI:15378"/>
        <dbReference type="ChEBI" id="CHEBI:57856"/>
        <dbReference type="ChEBI" id="CHEBI:134278"/>
        <dbReference type="ChEBI" id="CHEBI:136877"/>
        <dbReference type="ChEBI" id="CHEBI:136879"/>
    </reaction>
</comment>
<comment type="subunit">
    <text evidence="1">Homotetramer.</text>
</comment>
<comment type="similarity">
    <text evidence="1">Belongs to the class I-like SAM-binding methyltransferase superfamily. CmoB family.</text>
</comment>
<keyword id="KW-0808">Transferase</keyword>
<keyword id="KW-0819">tRNA processing</keyword>
<organism>
    <name type="scientific">Actinobacillus pleuropneumoniae serotype 7 (strain AP76)</name>
    <dbReference type="NCBI Taxonomy" id="537457"/>
    <lineage>
        <taxon>Bacteria</taxon>
        <taxon>Pseudomonadati</taxon>
        <taxon>Pseudomonadota</taxon>
        <taxon>Gammaproteobacteria</taxon>
        <taxon>Pasteurellales</taxon>
        <taxon>Pasteurellaceae</taxon>
        <taxon>Actinobacillus</taxon>
    </lineage>
</organism>
<protein>
    <recommendedName>
        <fullName evidence="1">tRNA U34 carboxymethyltransferase</fullName>
        <ecNumber evidence="1">2.5.1.-</ecNumber>
    </recommendedName>
</protein>
<gene>
    <name evidence="1" type="primary">cmoB</name>
    <name type="ordered locus">APP7_0871</name>
</gene>
<name>CMOB_ACTP7</name>
<reference key="1">
    <citation type="submission" date="2008-06" db="EMBL/GenBank/DDBJ databases">
        <title>Genome and proteome analysis of A. pleuropneumoniae serotype 7.</title>
        <authorList>
            <person name="Linke B."/>
            <person name="Buettner F."/>
            <person name="Martinez-Arias R."/>
            <person name="Goesmann A."/>
            <person name="Baltes N."/>
            <person name="Tegetmeyer H."/>
            <person name="Singh M."/>
            <person name="Gerlach G.F."/>
        </authorList>
    </citation>
    <scope>NUCLEOTIDE SEQUENCE [LARGE SCALE GENOMIC DNA]</scope>
    <source>
        <strain>AP76</strain>
    </source>
</reference>
<feature type="chain" id="PRO_1000201286" description="tRNA U34 carboxymethyltransferase">
    <location>
        <begin position="1"/>
        <end position="320"/>
    </location>
</feature>
<feature type="binding site" evidence="1">
    <location>
        <position position="89"/>
    </location>
    <ligand>
        <name>carboxy-S-adenosyl-L-methionine</name>
        <dbReference type="ChEBI" id="CHEBI:134278"/>
    </ligand>
</feature>
<feature type="binding site" evidence="1">
    <location>
        <position position="103"/>
    </location>
    <ligand>
        <name>carboxy-S-adenosyl-L-methionine</name>
        <dbReference type="ChEBI" id="CHEBI:134278"/>
    </ligand>
</feature>
<feature type="binding site" evidence="1">
    <location>
        <position position="108"/>
    </location>
    <ligand>
        <name>carboxy-S-adenosyl-L-methionine</name>
        <dbReference type="ChEBI" id="CHEBI:134278"/>
    </ligand>
</feature>
<feature type="binding site" evidence="1">
    <location>
        <position position="128"/>
    </location>
    <ligand>
        <name>carboxy-S-adenosyl-L-methionine</name>
        <dbReference type="ChEBI" id="CHEBI:134278"/>
    </ligand>
</feature>
<feature type="binding site" evidence="1">
    <location>
        <begin position="150"/>
        <end position="152"/>
    </location>
    <ligand>
        <name>carboxy-S-adenosyl-L-methionine</name>
        <dbReference type="ChEBI" id="CHEBI:134278"/>
    </ligand>
</feature>
<feature type="binding site" evidence="1">
    <location>
        <begin position="179"/>
        <end position="180"/>
    </location>
    <ligand>
        <name>carboxy-S-adenosyl-L-methionine</name>
        <dbReference type="ChEBI" id="CHEBI:134278"/>
    </ligand>
</feature>
<feature type="binding site" evidence="1">
    <location>
        <position position="194"/>
    </location>
    <ligand>
        <name>carboxy-S-adenosyl-L-methionine</name>
        <dbReference type="ChEBI" id="CHEBI:134278"/>
    </ligand>
</feature>
<feature type="binding site" evidence="1">
    <location>
        <position position="198"/>
    </location>
    <ligand>
        <name>carboxy-S-adenosyl-L-methionine</name>
        <dbReference type="ChEBI" id="CHEBI:134278"/>
    </ligand>
</feature>
<feature type="binding site" evidence="1">
    <location>
        <position position="313"/>
    </location>
    <ligand>
        <name>carboxy-S-adenosyl-L-methionine</name>
        <dbReference type="ChEBI" id="CHEBI:134278"/>
    </ligand>
</feature>
<dbReference type="EC" id="2.5.1.-" evidence="1"/>
<dbReference type="EMBL" id="CP001091">
    <property type="protein sequence ID" value="ACE61523.1"/>
    <property type="molecule type" value="Genomic_DNA"/>
</dbReference>
<dbReference type="RefSeq" id="WP_005617331.1">
    <property type="nucleotide sequence ID" value="NC_010939.1"/>
</dbReference>
<dbReference type="SMR" id="B3H1F1"/>
<dbReference type="KEGG" id="apa:APP7_0871"/>
<dbReference type="HOGENOM" id="CLU_052665_0_0_6"/>
<dbReference type="Proteomes" id="UP000001226">
    <property type="component" value="Chromosome"/>
</dbReference>
<dbReference type="GO" id="GO:0008168">
    <property type="term" value="F:methyltransferase activity"/>
    <property type="evidence" value="ECO:0007669"/>
    <property type="project" value="TreeGrafter"/>
</dbReference>
<dbReference type="GO" id="GO:0016765">
    <property type="term" value="F:transferase activity, transferring alkyl or aryl (other than methyl) groups"/>
    <property type="evidence" value="ECO:0007669"/>
    <property type="project" value="UniProtKB-UniRule"/>
</dbReference>
<dbReference type="GO" id="GO:0002098">
    <property type="term" value="P:tRNA wobble uridine modification"/>
    <property type="evidence" value="ECO:0007669"/>
    <property type="project" value="InterPro"/>
</dbReference>
<dbReference type="CDD" id="cd02440">
    <property type="entry name" value="AdoMet_MTases"/>
    <property type="match status" value="1"/>
</dbReference>
<dbReference type="Gene3D" id="3.40.50.150">
    <property type="entry name" value="Vaccinia Virus protein VP39"/>
    <property type="match status" value="1"/>
</dbReference>
<dbReference type="HAMAP" id="MF_01590">
    <property type="entry name" value="tRNA_carboxymethyltr_CmoB"/>
    <property type="match status" value="1"/>
</dbReference>
<dbReference type="InterPro" id="IPR010017">
    <property type="entry name" value="CmoB"/>
</dbReference>
<dbReference type="InterPro" id="IPR027555">
    <property type="entry name" value="Mo5U34_MeTrfas-like"/>
</dbReference>
<dbReference type="InterPro" id="IPR029063">
    <property type="entry name" value="SAM-dependent_MTases_sf"/>
</dbReference>
<dbReference type="NCBIfam" id="NF011650">
    <property type="entry name" value="PRK15068.1"/>
    <property type="match status" value="1"/>
</dbReference>
<dbReference type="NCBIfam" id="TIGR00452">
    <property type="entry name" value="tRNA 5-methoxyuridine(34)/uridine 5-oxyacetic acid(34) synthase CmoB"/>
    <property type="match status" value="1"/>
</dbReference>
<dbReference type="PANTHER" id="PTHR43464">
    <property type="entry name" value="METHYLTRANSFERASE"/>
    <property type="match status" value="1"/>
</dbReference>
<dbReference type="PANTHER" id="PTHR43464:SF95">
    <property type="entry name" value="TRNA U34 CARBOXYMETHYLTRANSFERASE"/>
    <property type="match status" value="1"/>
</dbReference>
<dbReference type="Pfam" id="PF08003">
    <property type="entry name" value="Methyltransf_9"/>
    <property type="match status" value="1"/>
</dbReference>
<dbReference type="SUPFAM" id="SSF53335">
    <property type="entry name" value="S-adenosyl-L-methionine-dependent methyltransferases"/>
    <property type="match status" value="1"/>
</dbReference>
<evidence type="ECO:0000255" key="1">
    <source>
        <dbReference type="HAMAP-Rule" id="MF_01590"/>
    </source>
</evidence>
<proteinExistence type="inferred from homology"/>
<sequence length="320" mass="36609">MIDFRPFYQQIATTNLSAWLETLPLQLKQWEKTTHGDYAKWAKIVDFMPNSTACINLKDKVESIPHTPLSVGETKQLTHHLKQLMPWRKGPYHLHGIHIDTEWRSDFKWDRVLPHLAPLKDRTILDVGCGSGYHMWRMVGEGAKMVVGIDPTELFLCQFEVVRKLLGNDRRANLIPLGIEQMQPLAAFDTVFSMGVLYHRKSPLDHLLQLKAQLVKGGELVLETLVIDGDVNTCLVPADRYAKMKNVYFIPSIDCLINWLEKVGFKNVRCVDQAVTTLEEQRKTDWLENESLVDFLDPNDHSKTIEGYPAPKRAVILANA</sequence>